<proteinExistence type="inferred from homology"/>
<dbReference type="EMBL" id="CP001217">
    <property type="protein sequence ID" value="ACJ07993.1"/>
    <property type="molecule type" value="Genomic_DNA"/>
</dbReference>
<dbReference type="SMR" id="B6JM65"/>
<dbReference type="KEGG" id="hpp:HPP12_0841"/>
<dbReference type="HOGENOM" id="CLU_016077_6_2_7"/>
<dbReference type="Proteomes" id="UP000008198">
    <property type="component" value="Chromosome"/>
</dbReference>
<dbReference type="GO" id="GO:0005525">
    <property type="term" value="F:GTP binding"/>
    <property type="evidence" value="ECO:0007669"/>
    <property type="project" value="UniProtKB-UniRule"/>
</dbReference>
<dbReference type="GO" id="GO:0043022">
    <property type="term" value="F:ribosome binding"/>
    <property type="evidence" value="ECO:0007669"/>
    <property type="project" value="TreeGrafter"/>
</dbReference>
<dbReference type="GO" id="GO:0042254">
    <property type="term" value="P:ribosome biogenesis"/>
    <property type="evidence" value="ECO:0007669"/>
    <property type="project" value="UniProtKB-KW"/>
</dbReference>
<dbReference type="CDD" id="cd01894">
    <property type="entry name" value="EngA1"/>
    <property type="match status" value="1"/>
</dbReference>
<dbReference type="CDD" id="cd01895">
    <property type="entry name" value="EngA2"/>
    <property type="match status" value="1"/>
</dbReference>
<dbReference type="FunFam" id="3.30.300.20:FF:000004">
    <property type="entry name" value="GTPase Der"/>
    <property type="match status" value="1"/>
</dbReference>
<dbReference type="FunFam" id="3.40.50.300:FF:002598">
    <property type="entry name" value="GTPase Der"/>
    <property type="match status" value="1"/>
</dbReference>
<dbReference type="FunFam" id="3.40.50.300:FF:000494">
    <property type="entry name" value="tRNA modification GTPase MnmE"/>
    <property type="match status" value="1"/>
</dbReference>
<dbReference type="Gene3D" id="3.30.300.20">
    <property type="match status" value="1"/>
</dbReference>
<dbReference type="Gene3D" id="3.40.50.300">
    <property type="entry name" value="P-loop containing nucleotide triphosphate hydrolases"/>
    <property type="match status" value="2"/>
</dbReference>
<dbReference type="HAMAP" id="MF_00195">
    <property type="entry name" value="GTPase_Der"/>
    <property type="match status" value="1"/>
</dbReference>
<dbReference type="InterPro" id="IPR031166">
    <property type="entry name" value="G_ENGA"/>
</dbReference>
<dbReference type="InterPro" id="IPR006073">
    <property type="entry name" value="GTP-bd"/>
</dbReference>
<dbReference type="InterPro" id="IPR016484">
    <property type="entry name" value="GTPase_Der"/>
</dbReference>
<dbReference type="InterPro" id="IPR032859">
    <property type="entry name" value="KH_dom-like"/>
</dbReference>
<dbReference type="InterPro" id="IPR015946">
    <property type="entry name" value="KH_dom-like_a/b"/>
</dbReference>
<dbReference type="InterPro" id="IPR027417">
    <property type="entry name" value="P-loop_NTPase"/>
</dbReference>
<dbReference type="InterPro" id="IPR005225">
    <property type="entry name" value="Small_GTP-bd"/>
</dbReference>
<dbReference type="NCBIfam" id="TIGR03594">
    <property type="entry name" value="GTPase_EngA"/>
    <property type="match status" value="1"/>
</dbReference>
<dbReference type="NCBIfam" id="TIGR00231">
    <property type="entry name" value="small_GTP"/>
    <property type="match status" value="2"/>
</dbReference>
<dbReference type="PANTHER" id="PTHR43834">
    <property type="entry name" value="GTPASE DER"/>
    <property type="match status" value="1"/>
</dbReference>
<dbReference type="PANTHER" id="PTHR43834:SF6">
    <property type="entry name" value="GTPASE DER"/>
    <property type="match status" value="1"/>
</dbReference>
<dbReference type="Pfam" id="PF14714">
    <property type="entry name" value="KH_dom-like"/>
    <property type="match status" value="1"/>
</dbReference>
<dbReference type="Pfam" id="PF01926">
    <property type="entry name" value="MMR_HSR1"/>
    <property type="match status" value="2"/>
</dbReference>
<dbReference type="PIRSF" id="PIRSF006485">
    <property type="entry name" value="GTP-binding_EngA"/>
    <property type="match status" value="1"/>
</dbReference>
<dbReference type="PRINTS" id="PR00326">
    <property type="entry name" value="GTP1OBG"/>
</dbReference>
<dbReference type="SUPFAM" id="SSF52540">
    <property type="entry name" value="P-loop containing nucleoside triphosphate hydrolases"/>
    <property type="match status" value="2"/>
</dbReference>
<dbReference type="PROSITE" id="PS51712">
    <property type="entry name" value="G_ENGA"/>
    <property type="match status" value="2"/>
</dbReference>
<sequence length="462" mass="51685">MNTSPKTLKTIAILGQPNVGKSSLFNRLARERIAITSDFAGTTRDINKRKIALNGHEVELLDTGGMAKDALLSKEIKALNLKAAQMSDLILYVVDGKSIPSDEDIKLFREVFKINPNCFLVINKIDNDKEKERAYAFSSFGTPKSFNISVSHNRGISALIDAVLNALNLNQIIEQDLDADILESLETPNNALEETKEEEIIQVGIIGRVNVGKSSLLNALTKKERSLVSSVAGTTIDPIDETILIGDQKICFVDTAGIRHRGKILGIEKYALERTQKALEKSHIALLVLDVSTPFVELDEKISSLADKHSLGIILILNKWDIRYAPYEEIMATLKRKFRFLEYAPVITTSCLKARHIDEIKHKIIEVYECFSKRIPTSLLNSVISQATQKHPLPSDGGKLVKVYYATQFATKPPQISLIMNRPKALHFSYKRYLINTLRKEFNFLGTPLILNAKDKKSAQQN</sequence>
<gene>
    <name evidence="1" type="primary">der</name>
    <name type="synonym">engA</name>
    <name type="ordered locus">HPP12_0841</name>
</gene>
<evidence type="ECO:0000255" key="1">
    <source>
        <dbReference type="HAMAP-Rule" id="MF_00195"/>
    </source>
</evidence>
<comment type="function">
    <text evidence="1">GTPase that plays an essential role in the late steps of ribosome biogenesis.</text>
</comment>
<comment type="subunit">
    <text evidence="1">Associates with the 50S ribosomal subunit.</text>
</comment>
<comment type="similarity">
    <text evidence="1">Belongs to the TRAFAC class TrmE-Era-EngA-EngB-Septin-like GTPase superfamily. EngA (Der) GTPase family.</text>
</comment>
<feature type="chain" id="PRO_1000099128" description="GTPase Der">
    <location>
        <begin position="1"/>
        <end position="462"/>
    </location>
</feature>
<feature type="domain" description="EngA-type G 1">
    <location>
        <begin position="9"/>
        <end position="171"/>
    </location>
</feature>
<feature type="domain" description="EngA-type G 2">
    <location>
        <begin position="201"/>
        <end position="372"/>
    </location>
</feature>
<feature type="domain" description="KH-like" evidence="1">
    <location>
        <begin position="373"/>
        <end position="457"/>
    </location>
</feature>
<feature type="binding site" evidence="1">
    <location>
        <begin position="15"/>
        <end position="22"/>
    </location>
    <ligand>
        <name>GTP</name>
        <dbReference type="ChEBI" id="CHEBI:37565"/>
        <label>1</label>
    </ligand>
</feature>
<feature type="binding site" evidence="1">
    <location>
        <begin position="62"/>
        <end position="66"/>
    </location>
    <ligand>
        <name>GTP</name>
        <dbReference type="ChEBI" id="CHEBI:37565"/>
        <label>1</label>
    </ligand>
</feature>
<feature type="binding site" evidence="1">
    <location>
        <begin position="123"/>
        <end position="126"/>
    </location>
    <ligand>
        <name>GTP</name>
        <dbReference type="ChEBI" id="CHEBI:37565"/>
        <label>1</label>
    </ligand>
</feature>
<feature type="binding site" evidence="1">
    <location>
        <begin position="207"/>
        <end position="214"/>
    </location>
    <ligand>
        <name>GTP</name>
        <dbReference type="ChEBI" id="CHEBI:37565"/>
        <label>2</label>
    </ligand>
</feature>
<feature type="binding site" evidence="1">
    <location>
        <begin position="254"/>
        <end position="258"/>
    </location>
    <ligand>
        <name>GTP</name>
        <dbReference type="ChEBI" id="CHEBI:37565"/>
        <label>2</label>
    </ligand>
</feature>
<feature type="binding site" evidence="1">
    <location>
        <begin position="318"/>
        <end position="321"/>
    </location>
    <ligand>
        <name>GTP</name>
        <dbReference type="ChEBI" id="CHEBI:37565"/>
        <label>2</label>
    </ligand>
</feature>
<accession>B6JM65</accession>
<organism>
    <name type="scientific">Helicobacter pylori (strain P12)</name>
    <dbReference type="NCBI Taxonomy" id="570508"/>
    <lineage>
        <taxon>Bacteria</taxon>
        <taxon>Pseudomonadati</taxon>
        <taxon>Campylobacterota</taxon>
        <taxon>Epsilonproteobacteria</taxon>
        <taxon>Campylobacterales</taxon>
        <taxon>Helicobacteraceae</taxon>
        <taxon>Helicobacter</taxon>
    </lineage>
</organism>
<reference key="1">
    <citation type="submission" date="2008-10" db="EMBL/GenBank/DDBJ databases">
        <title>The complete genome sequence of Helicobacter pylori strain P12.</title>
        <authorList>
            <person name="Fischer W."/>
            <person name="Windhager L."/>
            <person name="Karnholz A."/>
            <person name="Zeiller M."/>
            <person name="Zimmer R."/>
            <person name="Haas R."/>
        </authorList>
    </citation>
    <scope>NUCLEOTIDE SEQUENCE [LARGE SCALE GENOMIC DNA]</scope>
    <source>
        <strain>P12</strain>
    </source>
</reference>
<name>DER_HELP2</name>
<keyword id="KW-0342">GTP-binding</keyword>
<keyword id="KW-0547">Nucleotide-binding</keyword>
<keyword id="KW-0677">Repeat</keyword>
<keyword id="KW-0690">Ribosome biogenesis</keyword>
<protein>
    <recommendedName>
        <fullName evidence="1">GTPase Der</fullName>
    </recommendedName>
    <alternativeName>
        <fullName evidence="1">GTP-binding protein EngA</fullName>
    </alternativeName>
</protein>